<reference key="1">
    <citation type="journal article" date="2006" name="Vet. Immunol. Immunopathol.">
        <title>Comparative assessment of Th1 and Th2 cytokines of swamp type buffalo and other bubaline breeds by molecular cloning, sequencing and phylogenetics.</title>
        <authorList>
            <person name="Mingala C.N."/>
            <person name="Odbileg R."/>
            <person name="Konnai S."/>
            <person name="Ohashi K."/>
            <person name="Onuma M."/>
        </authorList>
    </citation>
    <scope>NUCLEOTIDE SEQUENCE [MRNA]</scope>
</reference>
<feature type="signal peptide" evidence="1">
    <location>
        <begin position="1"/>
        <end position="25"/>
    </location>
</feature>
<feature type="chain" id="PRO_0000254898" description="Interleukin-12 subunit alpha">
    <location>
        <begin position="26"/>
        <end position="221"/>
    </location>
</feature>
<feature type="glycosylation site" description="N-linked (GlcNAc...) asparagine" evidence="4">
    <location>
        <position position="95"/>
    </location>
</feature>
<feature type="disulfide bond" evidence="2">
    <location>
        <begin position="39"/>
        <end position="112"/>
    </location>
</feature>
<feature type="disulfide bond" evidence="1">
    <location>
        <begin position="66"/>
        <end position="198"/>
    </location>
</feature>
<feature type="disulfide bond" evidence="1">
    <location>
        <begin position="87"/>
        <end position="125"/>
    </location>
</feature>
<feature type="disulfide bond" description="Interchain (with C-200 in IL12B)" evidence="1">
    <location>
        <position position="98"/>
    </location>
</feature>
<sequence length="221" mass="24950">MCPLRSLLLISTLVLLHHLPHLSLGRSLPTTTASPGRSCLDYSQNLLRAVSNTLQKARQTLEFYSCTSEEIDHEDITKDKTSTVEACLPLELATNESCLASRETSFITNGRCLASGKTSFMTTLCLRSIYEDLKMYHVEFQAMNAKLLMDPKRQVFLDQNMLAAIAELMQALNFDSETVPQKPSLEELDFYKTKVKLCILLHAFRIRAVTIDRMMSYLSSS</sequence>
<proteinExistence type="evidence at transcript level"/>
<dbReference type="EMBL" id="AB246272">
    <property type="protein sequence ID" value="BAE75849.1"/>
    <property type="molecule type" value="mRNA"/>
</dbReference>
<dbReference type="SMR" id="Q2PE77"/>
<dbReference type="GlyCosmos" id="Q2PE77">
    <property type="glycosylation" value="1 site, No reported glycans"/>
</dbReference>
<dbReference type="GO" id="GO:0005615">
    <property type="term" value="C:extracellular space"/>
    <property type="evidence" value="ECO:0007669"/>
    <property type="project" value="UniProtKB-KW"/>
</dbReference>
<dbReference type="GO" id="GO:0005125">
    <property type="term" value="F:cytokine activity"/>
    <property type="evidence" value="ECO:0007669"/>
    <property type="project" value="UniProtKB-KW"/>
</dbReference>
<dbReference type="GO" id="GO:0008083">
    <property type="term" value="F:growth factor activity"/>
    <property type="evidence" value="ECO:0007669"/>
    <property type="project" value="UniProtKB-KW"/>
</dbReference>
<dbReference type="GO" id="GO:0005143">
    <property type="term" value="F:interleukin-12 receptor binding"/>
    <property type="evidence" value="ECO:0007669"/>
    <property type="project" value="InterPro"/>
</dbReference>
<dbReference type="GO" id="GO:0006955">
    <property type="term" value="P:immune response"/>
    <property type="evidence" value="ECO:0007669"/>
    <property type="project" value="InterPro"/>
</dbReference>
<dbReference type="GO" id="GO:0009891">
    <property type="term" value="P:positive regulation of biosynthetic process"/>
    <property type="evidence" value="ECO:0007669"/>
    <property type="project" value="UniProtKB-ARBA"/>
</dbReference>
<dbReference type="FunFam" id="1.20.1250.10:FF:000020">
    <property type="entry name" value="Interleukin-12 subunit alpha"/>
    <property type="match status" value="1"/>
</dbReference>
<dbReference type="Gene3D" id="1.20.1250.10">
    <property type="match status" value="1"/>
</dbReference>
<dbReference type="InterPro" id="IPR009079">
    <property type="entry name" value="4_helix_cytokine-like_core"/>
</dbReference>
<dbReference type="InterPro" id="IPR050676">
    <property type="entry name" value="IL-12"/>
</dbReference>
<dbReference type="InterPro" id="IPR004281">
    <property type="entry name" value="IL-12_alpha"/>
</dbReference>
<dbReference type="PANTHER" id="PTHR48485:SF1">
    <property type="entry name" value="INTERLEUKIN-12 SUBUNIT ALPHA"/>
    <property type="match status" value="1"/>
</dbReference>
<dbReference type="PANTHER" id="PTHR48485">
    <property type="entry name" value="INTERLEUKIN-12 SUBUNIT BETA-RELATED"/>
    <property type="match status" value="1"/>
</dbReference>
<dbReference type="Pfam" id="PF03039">
    <property type="entry name" value="IL12"/>
    <property type="match status" value="1"/>
</dbReference>
<dbReference type="SUPFAM" id="SSF47266">
    <property type="entry name" value="4-helical cytokines"/>
    <property type="match status" value="1"/>
</dbReference>
<protein>
    <recommendedName>
        <fullName>Interleukin-12 subunit alpha</fullName>
        <shortName>IL-12A</shortName>
    </recommendedName>
    <alternativeName>
        <fullName>Cytotoxic lymphocyte maturation factor 35 kDa subunit</fullName>
        <shortName>CLMF p35</shortName>
    </alternativeName>
    <alternativeName>
        <fullName>IL-12 subunit p35</fullName>
    </alternativeName>
</protein>
<name>IL12A_BUBCA</name>
<comment type="function">
    <text evidence="2 3">Heterodimerizes with IL12B to form the IL-12 cytokine or with EBI3/IL27B to form the IL-35 cytokine. IL-12 is primarily produced by professional antigen-presenting cells (APCs) such as B-cells and dendritic cells (DCs) as well as macrophages and granulocytes and regulates T-cell and natural killer-cell responses, induces the production of interferon-gamma (IFN-gamma), favors the differentiation of T-helper 1 (Th1) cells and is an important link between innate resistance and adaptive immunity. Mechanistically, exerts its biological effects through a receptor composed of IL12R1 and IL12R2 subunits. Binding to the receptor results in the rapid tyrosine phosphorylation of a number of cellular substrates including the JAK family kinases TYK2 and JAK2. In turn, recruited STAT4 gets phosphorylated and translocates to the nucleus where it regulates cytokine/growth factor responsive genes (By similarity). As part of IL-35, plays essential roles in maintaining the immune homeostasis of the liver microenvironment and also functions as an immune-suppressive cytokine (By similarity). Mediates biological events through unconventional receptors composed of IL12RB2 and gp130/IL6ST heterodimers or homodimers. Signaling requires the transcription factors STAT1 and STAT4, which form a unique heterodimer that binds to distinct DNA sites (By similarity).</text>
</comment>
<comment type="subunit">
    <text evidence="2 3">Heterodimer with IL12B; disulfide-linked. This heterodimer is known as interleukin IL-12. Heterodimer with EBI3/IL27B; not disulfide-linked. This heterodimer is known as interleukin IL-35. Interacts with NBR1; this interaction promotes IL-12 secretion (By similarity).</text>
</comment>
<comment type="subcellular location">
    <subcellularLocation>
        <location evidence="2">Secreted</location>
    </subcellularLocation>
</comment>
<comment type="similarity">
    <text evidence="5">Belongs to the IL-6 superfamily.</text>
</comment>
<keyword id="KW-0202">Cytokine</keyword>
<keyword id="KW-1015">Disulfide bond</keyword>
<keyword id="KW-0325">Glycoprotein</keyword>
<keyword id="KW-0339">Growth factor</keyword>
<keyword id="KW-0964">Secreted</keyword>
<keyword id="KW-0732">Signal</keyword>
<evidence type="ECO:0000250" key="1"/>
<evidence type="ECO:0000250" key="2">
    <source>
        <dbReference type="UniProtKB" id="P29459"/>
    </source>
</evidence>
<evidence type="ECO:0000250" key="3">
    <source>
        <dbReference type="UniProtKB" id="P43431"/>
    </source>
</evidence>
<evidence type="ECO:0000255" key="4"/>
<evidence type="ECO:0000305" key="5"/>
<organism>
    <name type="scientific">Bubalus carabanensis</name>
    <name type="common">Swamp type water buffalo</name>
    <name type="synonym">Bubalus bubalis carabanensis</name>
    <dbReference type="NCBI Taxonomy" id="3119969"/>
    <lineage>
        <taxon>Eukaryota</taxon>
        <taxon>Metazoa</taxon>
        <taxon>Chordata</taxon>
        <taxon>Craniata</taxon>
        <taxon>Vertebrata</taxon>
        <taxon>Euteleostomi</taxon>
        <taxon>Mammalia</taxon>
        <taxon>Eutheria</taxon>
        <taxon>Laurasiatheria</taxon>
        <taxon>Artiodactyla</taxon>
        <taxon>Ruminantia</taxon>
        <taxon>Pecora</taxon>
        <taxon>Bovidae</taxon>
        <taxon>Bovinae</taxon>
        <taxon>Bubalus</taxon>
    </lineage>
</organism>
<gene>
    <name type="primary">IL12A</name>
</gene>
<accession>Q2PE77</accession>